<gene>
    <name evidence="1" type="primary">hypA</name>
    <name type="ordered locus">LPC_2002</name>
</gene>
<protein>
    <recommendedName>
        <fullName evidence="1">Hydrogenase maturation factor HypA</fullName>
    </recommendedName>
</protein>
<evidence type="ECO:0000255" key="1">
    <source>
        <dbReference type="HAMAP-Rule" id="MF_00213"/>
    </source>
</evidence>
<dbReference type="EMBL" id="CP000675">
    <property type="protein sequence ID" value="ABQ55932.1"/>
    <property type="molecule type" value="Genomic_DNA"/>
</dbReference>
<dbReference type="RefSeq" id="WP_011947391.1">
    <property type="nucleotide sequence ID" value="NC_009494.2"/>
</dbReference>
<dbReference type="SMR" id="A5IEY2"/>
<dbReference type="KEGG" id="lpc:LPC_2002"/>
<dbReference type="HOGENOM" id="CLU_126929_3_0_6"/>
<dbReference type="GO" id="GO:0016151">
    <property type="term" value="F:nickel cation binding"/>
    <property type="evidence" value="ECO:0007669"/>
    <property type="project" value="UniProtKB-UniRule"/>
</dbReference>
<dbReference type="GO" id="GO:0008270">
    <property type="term" value="F:zinc ion binding"/>
    <property type="evidence" value="ECO:0007669"/>
    <property type="project" value="UniProtKB-UniRule"/>
</dbReference>
<dbReference type="GO" id="GO:0051604">
    <property type="term" value="P:protein maturation"/>
    <property type="evidence" value="ECO:0007669"/>
    <property type="project" value="InterPro"/>
</dbReference>
<dbReference type="GO" id="GO:0036211">
    <property type="term" value="P:protein modification process"/>
    <property type="evidence" value="ECO:0007669"/>
    <property type="project" value="UniProtKB-UniRule"/>
</dbReference>
<dbReference type="Gene3D" id="3.30.2320.80">
    <property type="match status" value="1"/>
</dbReference>
<dbReference type="HAMAP" id="MF_00213">
    <property type="entry name" value="HypA_HybF"/>
    <property type="match status" value="1"/>
</dbReference>
<dbReference type="InterPro" id="IPR020538">
    <property type="entry name" value="Hydgase_Ni_incorp_HypA/HybF_CS"/>
</dbReference>
<dbReference type="InterPro" id="IPR000688">
    <property type="entry name" value="HypA/HybF"/>
</dbReference>
<dbReference type="NCBIfam" id="TIGR00100">
    <property type="entry name" value="hypA"/>
    <property type="match status" value="1"/>
</dbReference>
<dbReference type="PANTHER" id="PTHR34535">
    <property type="entry name" value="HYDROGENASE MATURATION FACTOR HYPA"/>
    <property type="match status" value="1"/>
</dbReference>
<dbReference type="PANTHER" id="PTHR34535:SF3">
    <property type="entry name" value="HYDROGENASE MATURATION FACTOR HYPA"/>
    <property type="match status" value="1"/>
</dbReference>
<dbReference type="Pfam" id="PF01155">
    <property type="entry name" value="HypA"/>
    <property type="match status" value="1"/>
</dbReference>
<dbReference type="PIRSF" id="PIRSF004761">
    <property type="entry name" value="Hydrgn_mat_HypA"/>
    <property type="match status" value="1"/>
</dbReference>
<dbReference type="PROSITE" id="PS01249">
    <property type="entry name" value="HYPA"/>
    <property type="match status" value="1"/>
</dbReference>
<proteinExistence type="inferred from homology"/>
<keyword id="KW-0479">Metal-binding</keyword>
<keyword id="KW-0533">Nickel</keyword>
<keyword id="KW-0862">Zinc</keyword>
<feature type="chain" id="PRO_1000023833" description="Hydrogenase maturation factor HypA">
    <location>
        <begin position="1"/>
        <end position="113"/>
    </location>
</feature>
<feature type="binding site" evidence="1">
    <location>
        <position position="2"/>
    </location>
    <ligand>
        <name>Ni(2+)</name>
        <dbReference type="ChEBI" id="CHEBI:49786"/>
    </ligand>
</feature>
<feature type="binding site" evidence="1">
    <location>
        <position position="73"/>
    </location>
    <ligand>
        <name>Zn(2+)</name>
        <dbReference type="ChEBI" id="CHEBI:29105"/>
    </ligand>
</feature>
<feature type="binding site" evidence="1">
    <location>
        <position position="76"/>
    </location>
    <ligand>
        <name>Zn(2+)</name>
        <dbReference type="ChEBI" id="CHEBI:29105"/>
    </ligand>
</feature>
<feature type="binding site" evidence="1">
    <location>
        <position position="89"/>
    </location>
    <ligand>
        <name>Zn(2+)</name>
        <dbReference type="ChEBI" id="CHEBI:29105"/>
    </ligand>
</feature>
<feature type="binding site" evidence="1">
    <location>
        <position position="92"/>
    </location>
    <ligand>
        <name>Zn(2+)</name>
        <dbReference type="ChEBI" id="CHEBI:29105"/>
    </ligand>
</feature>
<organism>
    <name type="scientific">Legionella pneumophila (strain Corby)</name>
    <dbReference type="NCBI Taxonomy" id="400673"/>
    <lineage>
        <taxon>Bacteria</taxon>
        <taxon>Pseudomonadati</taxon>
        <taxon>Pseudomonadota</taxon>
        <taxon>Gammaproteobacteria</taxon>
        <taxon>Legionellales</taxon>
        <taxon>Legionellaceae</taxon>
        <taxon>Legionella</taxon>
    </lineage>
</organism>
<name>HYPA_LEGPC</name>
<accession>A5IEY2</accession>
<reference key="1">
    <citation type="submission" date="2006-11" db="EMBL/GenBank/DDBJ databases">
        <title>Identification and characterization of a new conjugation/ type IVA secretion system (trb/tra) of L. pneumophila Corby localized on a mobile genomic island.</title>
        <authorList>
            <person name="Gloeckner G."/>
            <person name="Albert-Weissenberger C."/>
            <person name="Weinmann E."/>
            <person name="Jacobi S."/>
            <person name="Schunder E."/>
            <person name="Steinert M."/>
            <person name="Buchrieser C."/>
            <person name="Hacker J."/>
            <person name="Heuner K."/>
        </authorList>
    </citation>
    <scope>NUCLEOTIDE SEQUENCE [LARGE SCALE GENOMIC DNA]</scope>
    <source>
        <strain>Corby</strain>
    </source>
</reference>
<sequence length="113" mass="12689">MHELWLCKRIVEIIKQQATGNKCRMVKKIVLEIGQLVAVDKHALNFSFKVITQGTIAQNAELSIVEIPGEAICNSCQQIVPMKQYYDECLVCGNHSLTLTKGEELKVKSMVVE</sequence>
<comment type="function">
    <text evidence="1">Involved in the maturation of [NiFe] hydrogenases. Required for nickel insertion into the metal center of the hydrogenase.</text>
</comment>
<comment type="similarity">
    <text evidence="1">Belongs to the HypA/HybF family.</text>
</comment>